<organism>
    <name type="scientific">Vibrio cholerae serotype O1 (strain M66-2)</name>
    <dbReference type="NCBI Taxonomy" id="579112"/>
    <lineage>
        <taxon>Bacteria</taxon>
        <taxon>Pseudomonadati</taxon>
        <taxon>Pseudomonadota</taxon>
        <taxon>Gammaproteobacteria</taxon>
        <taxon>Vibrionales</taxon>
        <taxon>Vibrionaceae</taxon>
        <taxon>Vibrio</taxon>
    </lineage>
</organism>
<proteinExistence type="inferred from homology"/>
<comment type="catalytic activity">
    <reaction evidence="1">
        <text>L-tryptophan + H2O = indole + pyruvate + NH4(+)</text>
        <dbReference type="Rhea" id="RHEA:19553"/>
        <dbReference type="ChEBI" id="CHEBI:15361"/>
        <dbReference type="ChEBI" id="CHEBI:15377"/>
        <dbReference type="ChEBI" id="CHEBI:16881"/>
        <dbReference type="ChEBI" id="CHEBI:28938"/>
        <dbReference type="ChEBI" id="CHEBI:57912"/>
        <dbReference type="EC" id="4.1.99.1"/>
    </reaction>
</comment>
<comment type="cofactor">
    <cofactor evidence="1">
        <name>pyridoxal 5'-phosphate</name>
        <dbReference type="ChEBI" id="CHEBI:597326"/>
    </cofactor>
</comment>
<comment type="pathway">
    <text evidence="1">Amino-acid degradation; L-tryptophan degradation via pyruvate pathway; indole and pyruvate from L-tryptophan: step 1/1.</text>
</comment>
<comment type="subunit">
    <text evidence="1">Homotetramer.</text>
</comment>
<comment type="similarity">
    <text evidence="1">Belongs to the beta-eliminating lyase family.</text>
</comment>
<gene>
    <name evidence="1" type="primary">tnaA</name>
    <name type="ordered locus">VCM66_A0159</name>
</gene>
<dbReference type="EC" id="4.1.99.1" evidence="1"/>
<dbReference type="EMBL" id="CP001234">
    <property type="protein sequence ID" value="ACP07140.1"/>
    <property type="molecule type" value="Genomic_DNA"/>
</dbReference>
<dbReference type="RefSeq" id="WP_000427054.1">
    <property type="nucleotide sequence ID" value="NC_012580.1"/>
</dbReference>
<dbReference type="SMR" id="C3LUI5"/>
<dbReference type="GeneID" id="69721961"/>
<dbReference type="KEGG" id="vcm:VCM66_A0159"/>
<dbReference type="HOGENOM" id="CLU_047223_0_0_6"/>
<dbReference type="UniPathway" id="UPA00332">
    <property type="reaction ID" value="UER00452"/>
</dbReference>
<dbReference type="Proteomes" id="UP000001217">
    <property type="component" value="Chromosome II"/>
</dbReference>
<dbReference type="GO" id="GO:0009034">
    <property type="term" value="F:tryptophanase activity"/>
    <property type="evidence" value="ECO:0007669"/>
    <property type="project" value="UniProtKB-UniRule"/>
</dbReference>
<dbReference type="FunFam" id="3.40.640.10:FF:000039">
    <property type="entry name" value="Tryptophanase"/>
    <property type="match status" value="1"/>
</dbReference>
<dbReference type="Gene3D" id="3.90.1150.10">
    <property type="entry name" value="Aspartate Aminotransferase, domain 1"/>
    <property type="match status" value="1"/>
</dbReference>
<dbReference type="Gene3D" id="3.40.640.10">
    <property type="entry name" value="Type I PLP-dependent aspartate aminotransferase-like (Major domain)"/>
    <property type="match status" value="1"/>
</dbReference>
<dbReference type="HAMAP" id="MF_00544">
    <property type="entry name" value="Tryptophanase"/>
    <property type="match status" value="1"/>
</dbReference>
<dbReference type="InterPro" id="IPR001597">
    <property type="entry name" value="ArAA_b-elim_lyase/Thr_aldolase"/>
</dbReference>
<dbReference type="InterPro" id="IPR011166">
    <property type="entry name" value="Beta-eliminating_lyase"/>
</dbReference>
<dbReference type="InterPro" id="IPR015424">
    <property type="entry name" value="PyrdxlP-dep_Trfase"/>
</dbReference>
<dbReference type="InterPro" id="IPR015421">
    <property type="entry name" value="PyrdxlP-dep_Trfase_major"/>
</dbReference>
<dbReference type="InterPro" id="IPR015422">
    <property type="entry name" value="PyrdxlP-dep_Trfase_small"/>
</dbReference>
<dbReference type="InterPro" id="IPR013440">
    <property type="entry name" value="TNase"/>
</dbReference>
<dbReference type="InterPro" id="IPR018176">
    <property type="entry name" value="Tryptophanase_CS"/>
</dbReference>
<dbReference type="NCBIfam" id="NF009709">
    <property type="entry name" value="PRK13238.1"/>
    <property type="match status" value="1"/>
</dbReference>
<dbReference type="NCBIfam" id="TIGR02617">
    <property type="entry name" value="tnaA_trp_ase"/>
    <property type="match status" value="1"/>
</dbReference>
<dbReference type="PANTHER" id="PTHR32325">
    <property type="entry name" value="BETA-ELIMINATING LYASE-LIKE PROTEIN-RELATED"/>
    <property type="match status" value="1"/>
</dbReference>
<dbReference type="PANTHER" id="PTHR32325:SF4">
    <property type="entry name" value="TRYPTOPHANASE"/>
    <property type="match status" value="1"/>
</dbReference>
<dbReference type="Pfam" id="PF01212">
    <property type="entry name" value="Beta_elim_lyase"/>
    <property type="match status" value="1"/>
</dbReference>
<dbReference type="PIRSF" id="PIRSF001386">
    <property type="entry name" value="Trpase"/>
    <property type="match status" value="1"/>
</dbReference>
<dbReference type="SUPFAM" id="SSF53383">
    <property type="entry name" value="PLP-dependent transferases"/>
    <property type="match status" value="1"/>
</dbReference>
<dbReference type="PROSITE" id="PS00853">
    <property type="entry name" value="BETA_ELIM_LYASE"/>
    <property type="match status" value="1"/>
</dbReference>
<name>TNAA_VIBCM</name>
<keyword id="KW-0456">Lyase</keyword>
<keyword id="KW-0663">Pyridoxal phosphate</keyword>
<keyword id="KW-0823">Tryptophan catabolism</keyword>
<sequence length="472" mass="52920">MENFKHLPEPFRIRVIEPVKRTTREYREKAILNAGMNPFLLDSEDVFIDLLTDSGTGAITQEMQAAMFRGDEAYSGSRSYHALARAVKDIFGYEYTIPTHQGRGAEQIYIPVLIKKREKEKGLDRSKMVALSNYFFDTTQGHTQINCCVAKNVYTEEAFDTGVKADFKGNFDLEKLEQAILEAGPANVPYIVSTITCNSAGGQPVSIANLKAVYEIAQRYDIPVIMDSARFAENAYFIQQRERDYRNWSIEEITREAYKYADGLAMSAKKDAMVQMGGLLCFKDESFFDVYTECRTLCVVQEGFPTYGGLEGGAMERLAVGLYDGMRQDWLAYRINQVEYLVNGLEAIGVICQQAGGHAAFVDAGKLLPHIPADQFPAHALACELYKVAGIRAVEIGSLLLGRDPATGKQHPCPAELLRLTIPRATYTQTHMDFIIEAFEKVKANARNVKGLEFTYEPPVLRHFTARLKEKA</sequence>
<protein>
    <recommendedName>
        <fullName evidence="1">Tryptophanase</fullName>
        <ecNumber evidence="1">4.1.99.1</ecNumber>
    </recommendedName>
    <alternativeName>
        <fullName evidence="1">L-tryptophan indole-lyase</fullName>
        <shortName evidence="1">TNase</shortName>
    </alternativeName>
</protein>
<reference key="1">
    <citation type="journal article" date="2008" name="PLoS ONE">
        <title>A recalibrated molecular clock and independent origins for the cholera pandemic clones.</title>
        <authorList>
            <person name="Feng L."/>
            <person name="Reeves P.R."/>
            <person name="Lan R."/>
            <person name="Ren Y."/>
            <person name="Gao C."/>
            <person name="Zhou Z."/>
            <person name="Ren Y."/>
            <person name="Cheng J."/>
            <person name="Wang W."/>
            <person name="Wang J."/>
            <person name="Qian W."/>
            <person name="Li D."/>
            <person name="Wang L."/>
        </authorList>
    </citation>
    <scope>NUCLEOTIDE SEQUENCE [LARGE SCALE GENOMIC DNA]</scope>
    <source>
        <strain>M66-2</strain>
    </source>
</reference>
<feature type="chain" id="PRO_1000146594" description="Tryptophanase">
    <location>
        <begin position="1"/>
        <end position="472"/>
    </location>
</feature>
<feature type="modified residue" description="N6-(pyridoxal phosphate)lysine" evidence="1">
    <location>
        <position position="270"/>
    </location>
</feature>
<evidence type="ECO:0000255" key="1">
    <source>
        <dbReference type="HAMAP-Rule" id="MF_00544"/>
    </source>
</evidence>
<accession>C3LUI5</accession>